<sequence>MGTPIKKISTVIIKMVSSANTGYFYRTTKSALLSTKKLLLRKYDPVIRQHVLFKEEKISRKKN</sequence>
<feature type="chain" id="PRO_0000312368" description="Large ribosomal subunit protein bL33m">
    <location>
        <begin position="1"/>
        <end position="63"/>
    </location>
</feature>
<proteinExistence type="inferred from homology"/>
<keyword id="KW-0496">Mitochondrion</keyword>
<keyword id="KW-1185">Reference proteome</keyword>
<keyword id="KW-0687">Ribonucleoprotein</keyword>
<keyword id="KW-0689">Ribosomal protein</keyword>
<protein>
    <recommendedName>
        <fullName evidence="1">Large ribosomal subunit protein bL33m</fullName>
    </recommendedName>
    <alternativeName>
        <fullName evidence="1">39S ribosomal protein L33, mitochondrial</fullName>
        <shortName>L33mt</shortName>
        <shortName>MRP-L33</shortName>
    </alternativeName>
</protein>
<accession>Q54YX7</accession>
<organism>
    <name type="scientific">Dictyostelium discoideum</name>
    <name type="common">Social amoeba</name>
    <dbReference type="NCBI Taxonomy" id="44689"/>
    <lineage>
        <taxon>Eukaryota</taxon>
        <taxon>Amoebozoa</taxon>
        <taxon>Evosea</taxon>
        <taxon>Eumycetozoa</taxon>
        <taxon>Dictyostelia</taxon>
        <taxon>Dictyosteliales</taxon>
        <taxon>Dictyosteliaceae</taxon>
        <taxon>Dictyostelium</taxon>
    </lineage>
</organism>
<evidence type="ECO:0000305" key="1"/>
<name>RM33_DICDI</name>
<comment type="subcellular location">
    <subcellularLocation>
        <location evidence="1">Mitochondrion</location>
    </subcellularLocation>
</comment>
<comment type="similarity">
    <text evidence="1">Belongs to the bacterial ribosomal protein bL33 family.</text>
</comment>
<reference key="1">
    <citation type="journal article" date="2005" name="Nature">
        <title>The genome of the social amoeba Dictyostelium discoideum.</title>
        <authorList>
            <person name="Eichinger L."/>
            <person name="Pachebat J.A."/>
            <person name="Gloeckner G."/>
            <person name="Rajandream M.A."/>
            <person name="Sucgang R."/>
            <person name="Berriman M."/>
            <person name="Song J."/>
            <person name="Olsen R."/>
            <person name="Szafranski K."/>
            <person name="Xu Q."/>
            <person name="Tunggal B."/>
            <person name="Kummerfeld S."/>
            <person name="Madera M."/>
            <person name="Konfortov B.A."/>
            <person name="Rivero F."/>
            <person name="Bankier A.T."/>
            <person name="Lehmann R."/>
            <person name="Hamlin N."/>
            <person name="Davies R."/>
            <person name="Gaudet P."/>
            <person name="Fey P."/>
            <person name="Pilcher K."/>
            <person name="Chen G."/>
            <person name="Saunders D."/>
            <person name="Sodergren E.J."/>
            <person name="Davis P."/>
            <person name="Kerhornou A."/>
            <person name="Nie X."/>
            <person name="Hall N."/>
            <person name="Anjard C."/>
            <person name="Hemphill L."/>
            <person name="Bason N."/>
            <person name="Farbrother P."/>
            <person name="Desany B."/>
            <person name="Just E."/>
            <person name="Morio T."/>
            <person name="Rost R."/>
            <person name="Churcher C.M."/>
            <person name="Cooper J."/>
            <person name="Haydock S."/>
            <person name="van Driessche N."/>
            <person name="Cronin A."/>
            <person name="Goodhead I."/>
            <person name="Muzny D.M."/>
            <person name="Mourier T."/>
            <person name="Pain A."/>
            <person name="Lu M."/>
            <person name="Harper D."/>
            <person name="Lindsay R."/>
            <person name="Hauser H."/>
            <person name="James K.D."/>
            <person name="Quiles M."/>
            <person name="Madan Babu M."/>
            <person name="Saito T."/>
            <person name="Buchrieser C."/>
            <person name="Wardroper A."/>
            <person name="Felder M."/>
            <person name="Thangavelu M."/>
            <person name="Johnson D."/>
            <person name="Knights A."/>
            <person name="Loulseged H."/>
            <person name="Mungall K.L."/>
            <person name="Oliver K."/>
            <person name="Price C."/>
            <person name="Quail M.A."/>
            <person name="Urushihara H."/>
            <person name="Hernandez J."/>
            <person name="Rabbinowitsch E."/>
            <person name="Steffen D."/>
            <person name="Sanders M."/>
            <person name="Ma J."/>
            <person name="Kohara Y."/>
            <person name="Sharp S."/>
            <person name="Simmonds M.N."/>
            <person name="Spiegler S."/>
            <person name="Tivey A."/>
            <person name="Sugano S."/>
            <person name="White B."/>
            <person name="Walker D."/>
            <person name="Woodward J.R."/>
            <person name="Winckler T."/>
            <person name="Tanaka Y."/>
            <person name="Shaulsky G."/>
            <person name="Schleicher M."/>
            <person name="Weinstock G.M."/>
            <person name="Rosenthal A."/>
            <person name="Cox E.C."/>
            <person name="Chisholm R.L."/>
            <person name="Gibbs R.A."/>
            <person name="Loomis W.F."/>
            <person name="Platzer M."/>
            <person name="Kay R.R."/>
            <person name="Williams J.G."/>
            <person name="Dear P.H."/>
            <person name="Noegel A.A."/>
            <person name="Barrell B.G."/>
            <person name="Kuspa A."/>
        </authorList>
    </citation>
    <scope>NUCLEOTIDE SEQUENCE [LARGE SCALE GENOMIC DNA]</scope>
    <source>
        <strain>AX4</strain>
    </source>
</reference>
<dbReference type="EMBL" id="AAFI02000023">
    <property type="protein sequence ID" value="EAL68184.1"/>
    <property type="molecule type" value="Genomic_DNA"/>
</dbReference>
<dbReference type="RefSeq" id="XP_642075.1">
    <property type="nucleotide sequence ID" value="XM_636983.1"/>
</dbReference>
<dbReference type="SMR" id="Q54YX7"/>
<dbReference type="FunCoup" id="Q54YX7">
    <property type="interactions" value="34"/>
</dbReference>
<dbReference type="STRING" id="44689.Q54YX7"/>
<dbReference type="PaxDb" id="44689-DDB0267023"/>
<dbReference type="EnsemblProtists" id="EAL68184">
    <property type="protein sequence ID" value="EAL68184"/>
    <property type="gene ID" value="DDB_G0278023"/>
</dbReference>
<dbReference type="GeneID" id="8621288"/>
<dbReference type="KEGG" id="ddi:DDB_G0278023"/>
<dbReference type="dictyBase" id="DDB_G0278023">
    <property type="gene designation" value="mrpl33"/>
</dbReference>
<dbReference type="VEuPathDB" id="AmoebaDB:DDB_G0278023"/>
<dbReference type="eggNOG" id="ENOG502R09Y">
    <property type="taxonomic scope" value="Eukaryota"/>
</dbReference>
<dbReference type="HOGENOM" id="CLU_190949_1_0_1"/>
<dbReference type="InParanoid" id="Q54YX7"/>
<dbReference type="OMA" id="RMTLRKY"/>
<dbReference type="PhylomeDB" id="Q54YX7"/>
<dbReference type="PRO" id="PR:Q54YX7"/>
<dbReference type="Proteomes" id="UP000002195">
    <property type="component" value="Chromosome 3"/>
</dbReference>
<dbReference type="GO" id="GO:0015934">
    <property type="term" value="C:large ribosomal subunit"/>
    <property type="evidence" value="ECO:0000318"/>
    <property type="project" value="GO_Central"/>
</dbReference>
<dbReference type="GO" id="GO:0005739">
    <property type="term" value="C:mitochondrion"/>
    <property type="evidence" value="ECO:0007669"/>
    <property type="project" value="UniProtKB-SubCell"/>
</dbReference>
<dbReference type="GO" id="GO:0003735">
    <property type="term" value="F:structural constituent of ribosome"/>
    <property type="evidence" value="ECO:0000318"/>
    <property type="project" value="GO_Central"/>
</dbReference>
<dbReference type="GO" id="GO:0006412">
    <property type="term" value="P:translation"/>
    <property type="evidence" value="ECO:0007669"/>
    <property type="project" value="InterPro"/>
</dbReference>
<dbReference type="FunFam" id="2.20.28.120:FF:000007">
    <property type="entry name" value="50S ribosomal protein L33"/>
    <property type="match status" value="1"/>
</dbReference>
<dbReference type="Gene3D" id="2.20.28.120">
    <property type="entry name" value="Ribosomal protein L33"/>
    <property type="match status" value="1"/>
</dbReference>
<dbReference type="InterPro" id="IPR001705">
    <property type="entry name" value="Ribosomal_bL33"/>
</dbReference>
<dbReference type="InterPro" id="IPR038584">
    <property type="entry name" value="Ribosomal_bL33_sf"/>
</dbReference>
<dbReference type="InterPro" id="IPR011332">
    <property type="entry name" value="Ribosomal_zn-bd"/>
</dbReference>
<dbReference type="NCBIfam" id="NF001860">
    <property type="entry name" value="PRK00595.1"/>
    <property type="match status" value="1"/>
</dbReference>
<dbReference type="NCBIfam" id="TIGR01023">
    <property type="entry name" value="rpmG_bact"/>
    <property type="match status" value="1"/>
</dbReference>
<dbReference type="PANTHER" id="PTHR15238">
    <property type="entry name" value="54S RIBOSOMAL PROTEIN L39, MITOCHONDRIAL"/>
    <property type="match status" value="1"/>
</dbReference>
<dbReference type="PANTHER" id="PTHR15238:SF1">
    <property type="entry name" value="LARGE RIBOSOMAL SUBUNIT PROTEIN BL33M"/>
    <property type="match status" value="1"/>
</dbReference>
<dbReference type="Pfam" id="PF00471">
    <property type="entry name" value="Ribosomal_L33"/>
    <property type="match status" value="1"/>
</dbReference>
<dbReference type="SUPFAM" id="SSF57829">
    <property type="entry name" value="Zn-binding ribosomal proteins"/>
    <property type="match status" value="1"/>
</dbReference>
<gene>
    <name type="primary">mrpl33</name>
    <name type="ORF">DDB_G0278023</name>
</gene>